<sequence length="147" mass="15993">MKIIIQRVNQASVSIEDDVVGSIEKGLVLLVGIAPEDTTEDIAYAVRKITSMRIFSDDEGKMNLSIQDIKGSVLSISQFTLFADTKKGNRPAFTGAADPVKANQFYDIFNQELANHVSVETGQFGADMQVSLINDGPVTIVLDTKNK</sequence>
<comment type="function">
    <text evidence="1">An aminoacyl-tRNA editing enzyme that deacylates mischarged D-aminoacyl-tRNAs. Also deacylates mischarged glycyl-tRNA(Ala), protecting cells against glycine mischarging by AlaRS. Acts via tRNA-based rather than protein-based catalysis; rejects L-amino acids rather than detecting D-amino acids in the active site. By recycling D-aminoacyl-tRNA to D-amino acids and free tRNA molecules, this enzyme counteracts the toxicity associated with the formation of D-aminoacyl-tRNA entities in vivo and helps enforce protein L-homochirality.</text>
</comment>
<comment type="catalytic activity">
    <reaction evidence="1">
        <text>glycyl-tRNA(Ala) + H2O = tRNA(Ala) + glycine + H(+)</text>
        <dbReference type="Rhea" id="RHEA:53744"/>
        <dbReference type="Rhea" id="RHEA-COMP:9657"/>
        <dbReference type="Rhea" id="RHEA-COMP:13640"/>
        <dbReference type="ChEBI" id="CHEBI:15377"/>
        <dbReference type="ChEBI" id="CHEBI:15378"/>
        <dbReference type="ChEBI" id="CHEBI:57305"/>
        <dbReference type="ChEBI" id="CHEBI:78442"/>
        <dbReference type="ChEBI" id="CHEBI:78522"/>
        <dbReference type="EC" id="3.1.1.96"/>
    </reaction>
</comment>
<comment type="catalytic activity">
    <reaction evidence="1">
        <text>a D-aminoacyl-tRNA + H2O = a tRNA + a D-alpha-amino acid + H(+)</text>
        <dbReference type="Rhea" id="RHEA:13953"/>
        <dbReference type="Rhea" id="RHEA-COMP:10123"/>
        <dbReference type="Rhea" id="RHEA-COMP:10124"/>
        <dbReference type="ChEBI" id="CHEBI:15377"/>
        <dbReference type="ChEBI" id="CHEBI:15378"/>
        <dbReference type="ChEBI" id="CHEBI:59871"/>
        <dbReference type="ChEBI" id="CHEBI:78442"/>
        <dbReference type="ChEBI" id="CHEBI:79333"/>
        <dbReference type="EC" id="3.1.1.96"/>
    </reaction>
</comment>
<comment type="subunit">
    <text evidence="1">Homodimer.</text>
</comment>
<comment type="subcellular location">
    <subcellularLocation>
        <location evidence="1">Cytoplasm</location>
    </subcellularLocation>
</comment>
<comment type="domain">
    <text evidence="1">A Gly-cisPro motif from one monomer fits into the active site of the other monomer to allow specific chiral rejection of L-amino acids.</text>
</comment>
<comment type="similarity">
    <text evidence="1">Belongs to the DTD family.</text>
</comment>
<reference key="1">
    <citation type="journal article" date="2002" name="Proc. Natl. Acad. Sci. U.S.A.">
        <title>Complete genome sequence and comparative genomic analysis of an emerging human pathogen, serotype V Streptococcus agalactiae.</title>
        <authorList>
            <person name="Tettelin H."/>
            <person name="Masignani V."/>
            <person name="Cieslewicz M.J."/>
            <person name="Eisen J.A."/>
            <person name="Peterson S.N."/>
            <person name="Wessels M.R."/>
            <person name="Paulsen I.T."/>
            <person name="Nelson K.E."/>
            <person name="Margarit I."/>
            <person name="Read T.D."/>
            <person name="Madoff L.C."/>
            <person name="Wolf A.M."/>
            <person name="Beanan M.J."/>
            <person name="Brinkac L.M."/>
            <person name="Daugherty S.C."/>
            <person name="DeBoy R.T."/>
            <person name="Durkin A.S."/>
            <person name="Kolonay J.F."/>
            <person name="Madupu R."/>
            <person name="Lewis M.R."/>
            <person name="Radune D."/>
            <person name="Fedorova N.B."/>
            <person name="Scanlan D."/>
            <person name="Khouri H.M."/>
            <person name="Mulligan S."/>
            <person name="Carty H.A."/>
            <person name="Cline R.T."/>
            <person name="Van Aken S.E."/>
            <person name="Gill J."/>
            <person name="Scarselli M."/>
            <person name="Mora M."/>
            <person name="Iacobini E.T."/>
            <person name="Brettoni C."/>
            <person name="Galli G."/>
            <person name="Mariani M."/>
            <person name="Vegni F."/>
            <person name="Maione D."/>
            <person name="Rinaudo D."/>
            <person name="Rappuoli R."/>
            <person name="Telford J.L."/>
            <person name="Kasper D.L."/>
            <person name="Grandi G."/>
            <person name="Fraser C.M."/>
        </authorList>
    </citation>
    <scope>NUCLEOTIDE SEQUENCE [LARGE SCALE GENOMIC DNA]</scope>
    <source>
        <strain>ATCC BAA-611 / 2603 V/R</strain>
    </source>
</reference>
<organism>
    <name type="scientific">Streptococcus agalactiae serotype V (strain ATCC BAA-611 / 2603 V/R)</name>
    <dbReference type="NCBI Taxonomy" id="208435"/>
    <lineage>
        <taxon>Bacteria</taxon>
        <taxon>Bacillati</taxon>
        <taxon>Bacillota</taxon>
        <taxon>Bacilli</taxon>
        <taxon>Lactobacillales</taxon>
        <taxon>Streptococcaceae</taxon>
        <taxon>Streptococcus</taxon>
    </lineage>
</organism>
<keyword id="KW-0963">Cytoplasm</keyword>
<keyword id="KW-0378">Hydrolase</keyword>
<keyword id="KW-1185">Reference proteome</keyword>
<keyword id="KW-0694">RNA-binding</keyword>
<keyword id="KW-0820">tRNA-binding</keyword>
<protein>
    <recommendedName>
        <fullName evidence="1">D-aminoacyl-tRNA deacylase</fullName>
        <shortName evidence="1">DTD</shortName>
        <ecNumber evidence="1">3.1.1.96</ecNumber>
    </recommendedName>
    <alternativeName>
        <fullName evidence="1">Gly-tRNA(Ala) deacylase</fullName>
    </alternativeName>
</protein>
<gene>
    <name evidence="1" type="primary">dtd</name>
    <name type="ordered locus">SAG1939</name>
</gene>
<dbReference type="EC" id="3.1.1.96" evidence="1"/>
<dbReference type="EMBL" id="AE009948">
    <property type="protein sequence ID" value="AAN00800.1"/>
    <property type="molecule type" value="Genomic_DNA"/>
</dbReference>
<dbReference type="RefSeq" id="NP_688927.1">
    <property type="nucleotide sequence ID" value="NC_004116.1"/>
</dbReference>
<dbReference type="RefSeq" id="WP_000691430.1">
    <property type="nucleotide sequence ID" value="NC_004116.1"/>
</dbReference>
<dbReference type="SMR" id="P63998"/>
<dbReference type="STRING" id="208435.SAG1939"/>
<dbReference type="KEGG" id="sag:SAG1939"/>
<dbReference type="PATRIC" id="fig|208435.3.peg.1945"/>
<dbReference type="HOGENOM" id="CLU_076901_1_0_9"/>
<dbReference type="OrthoDB" id="9801395at2"/>
<dbReference type="Proteomes" id="UP000000821">
    <property type="component" value="Chromosome"/>
</dbReference>
<dbReference type="GO" id="GO:0005737">
    <property type="term" value="C:cytoplasm"/>
    <property type="evidence" value="ECO:0007669"/>
    <property type="project" value="UniProtKB-SubCell"/>
</dbReference>
<dbReference type="GO" id="GO:0051500">
    <property type="term" value="F:D-tyrosyl-tRNA(Tyr) deacylase activity"/>
    <property type="evidence" value="ECO:0007669"/>
    <property type="project" value="TreeGrafter"/>
</dbReference>
<dbReference type="GO" id="GO:0106026">
    <property type="term" value="F:Gly-tRNA(Ala) deacylase activity"/>
    <property type="evidence" value="ECO:0007669"/>
    <property type="project" value="UniProtKB-UniRule"/>
</dbReference>
<dbReference type="GO" id="GO:0043908">
    <property type="term" value="F:Ser(Gly)-tRNA(Ala) hydrolase activity"/>
    <property type="evidence" value="ECO:0007669"/>
    <property type="project" value="UniProtKB-UniRule"/>
</dbReference>
<dbReference type="GO" id="GO:0000049">
    <property type="term" value="F:tRNA binding"/>
    <property type="evidence" value="ECO:0007669"/>
    <property type="project" value="UniProtKB-UniRule"/>
</dbReference>
<dbReference type="GO" id="GO:0019478">
    <property type="term" value="P:D-amino acid catabolic process"/>
    <property type="evidence" value="ECO:0007669"/>
    <property type="project" value="UniProtKB-UniRule"/>
</dbReference>
<dbReference type="CDD" id="cd00563">
    <property type="entry name" value="Dtyr_deacylase"/>
    <property type="match status" value="1"/>
</dbReference>
<dbReference type="FunFam" id="3.50.80.10:FF:000001">
    <property type="entry name" value="D-aminoacyl-tRNA deacylase"/>
    <property type="match status" value="1"/>
</dbReference>
<dbReference type="Gene3D" id="3.50.80.10">
    <property type="entry name" value="D-tyrosyl-tRNA(Tyr) deacylase"/>
    <property type="match status" value="1"/>
</dbReference>
<dbReference type="HAMAP" id="MF_00518">
    <property type="entry name" value="Deacylase_Dtd"/>
    <property type="match status" value="1"/>
</dbReference>
<dbReference type="InterPro" id="IPR003732">
    <property type="entry name" value="Daa-tRNA_deacyls_DTD"/>
</dbReference>
<dbReference type="InterPro" id="IPR023509">
    <property type="entry name" value="DTD-like_sf"/>
</dbReference>
<dbReference type="NCBIfam" id="TIGR00256">
    <property type="entry name" value="D-aminoacyl-tRNA deacylase"/>
    <property type="match status" value="1"/>
</dbReference>
<dbReference type="PANTHER" id="PTHR10472:SF5">
    <property type="entry name" value="D-AMINOACYL-TRNA DEACYLASE 1"/>
    <property type="match status" value="1"/>
</dbReference>
<dbReference type="PANTHER" id="PTHR10472">
    <property type="entry name" value="D-TYROSYL-TRNA TYR DEACYLASE"/>
    <property type="match status" value="1"/>
</dbReference>
<dbReference type="Pfam" id="PF02580">
    <property type="entry name" value="Tyr_Deacylase"/>
    <property type="match status" value="1"/>
</dbReference>
<dbReference type="SUPFAM" id="SSF69500">
    <property type="entry name" value="DTD-like"/>
    <property type="match status" value="1"/>
</dbReference>
<evidence type="ECO:0000255" key="1">
    <source>
        <dbReference type="HAMAP-Rule" id="MF_00518"/>
    </source>
</evidence>
<accession>P63998</accession>
<accession>Q8DXB3</accession>
<accession>Q8E336</accession>
<proteinExistence type="inferred from homology"/>
<name>DTD_STRA5</name>
<feature type="chain" id="PRO_0000164595" description="D-aminoacyl-tRNA deacylase">
    <location>
        <begin position="1"/>
        <end position="147"/>
    </location>
</feature>
<feature type="short sequence motif" description="Gly-cisPro motif, important for rejection of L-amino acids" evidence="1">
    <location>
        <begin position="136"/>
        <end position="137"/>
    </location>
</feature>